<keyword id="KW-0963">Cytoplasm</keyword>
<keyword id="KW-0251">Elongation factor</keyword>
<keyword id="KW-0648">Protein biosynthesis</keyword>
<feature type="chain" id="PRO_1000116697" description="Elongation factor Ts">
    <location>
        <begin position="1"/>
        <end position="278"/>
    </location>
</feature>
<feature type="region of interest" description="Involved in Mg(2+) ion dislocation from EF-Tu" evidence="1">
    <location>
        <begin position="79"/>
        <end position="82"/>
    </location>
</feature>
<evidence type="ECO:0000255" key="1">
    <source>
        <dbReference type="HAMAP-Rule" id="MF_00050"/>
    </source>
</evidence>
<name>EFTS_BORHD</name>
<sequence>MSISPQEVKKLRDATGAGFGDCKKALDAVGGDFELAKKKLREMGIASADKRSGRDAKEGRVFSYVNKERVGLLLISCETDFVAMNGDFVTFGNSLIKQLVESGKDSLDEQQELEIKNLAATIKENIHVSKIYISNIASNELVKNYLHGEQSKIGVFIKLRVDDVLKIEDGSLNSLTMDLALHVAAFAPLYLSVGDVCPNYIKEQEEVFMKQMEASGKPENVIKGIVSGKLKKHLGEITLLEQGFVKDDKLTVKEKIEEVSKSILTKIEIIDFKYFSVG</sequence>
<organism>
    <name type="scientific">Borrelia hermsii (strain HS1 / DAH)</name>
    <dbReference type="NCBI Taxonomy" id="314723"/>
    <lineage>
        <taxon>Bacteria</taxon>
        <taxon>Pseudomonadati</taxon>
        <taxon>Spirochaetota</taxon>
        <taxon>Spirochaetia</taxon>
        <taxon>Spirochaetales</taxon>
        <taxon>Borreliaceae</taxon>
        <taxon>Borrelia</taxon>
    </lineage>
</organism>
<protein>
    <recommendedName>
        <fullName evidence="1">Elongation factor Ts</fullName>
        <shortName evidence="1">EF-Ts</shortName>
    </recommendedName>
</protein>
<proteinExistence type="inferred from homology"/>
<reference key="1">
    <citation type="submission" date="2004-12" db="EMBL/GenBank/DDBJ databases">
        <title>The genome sequence of Borrelia hermsii and Borrelia turicatae: comparative analysis of two agents of endemic N. America relapsing fever.</title>
        <authorList>
            <person name="Porcella S.F."/>
            <person name="Raffel S.J."/>
            <person name="Schrumpf M.E."/>
            <person name="Montgomery B."/>
            <person name="Smith T."/>
            <person name="Schwan T.G."/>
        </authorList>
    </citation>
    <scope>NUCLEOTIDE SEQUENCE [LARGE SCALE GENOMIC DNA]</scope>
    <source>
        <strain>HS1 / DAH</strain>
    </source>
</reference>
<accession>B2RZI7</accession>
<comment type="function">
    <text evidence="1">Associates with the EF-Tu.GDP complex and induces the exchange of GDP to GTP. It remains bound to the aminoacyl-tRNA.EF-Tu.GTP complex up to the GTP hydrolysis stage on the ribosome.</text>
</comment>
<comment type="subcellular location">
    <subcellularLocation>
        <location evidence="1">Cytoplasm</location>
    </subcellularLocation>
</comment>
<comment type="similarity">
    <text evidence="1">Belongs to the EF-Ts family.</text>
</comment>
<gene>
    <name evidence="1" type="primary">tsf</name>
    <name type="ordered locus">BH0122</name>
</gene>
<dbReference type="EMBL" id="CP000048">
    <property type="protein sequence ID" value="AAX16643.1"/>
    <property type="molecule type" value="Genomic_DNA"/>
</dbReference>
<dbReference type="RefSeq" id="WP_012421900.1">
    <property type="nucleotide sequence ID" value="NZ_CP073136.1"/>
</dbReference>
<dbReference type="SMR" id="B2RZI7"/>
<dbReference type="KEGG" id="bhr:BH0122"/>
<dbReference type="HOGENOM" id="CLU_047155_0_0_12"/>
<dbReference type="Proteomes" id="UP000008834">
    <property type="component" value="Chromosome"/>
</dbReference>
<dbReference type="GO" id="GO:0005737">
    <property type="term" value="C:cytoplasm"/>
    <property type="evidence" value="ECO:0007669"/>
    <property type="project" value="UniProtKB-SubCell"/>
</dbReference>
<dbReference type="GO" id="GO:0003746">
    <property type="term" value="F:translation elongation factor activity"/>
    <property type="evidence" value="ECO:0007669"/>
    <property type="project" value="UniProtKB-UniRule"/>
</dbReference>
<dbReference type="CDD" id="cd14275">
    <property type="entry name" value="UBA_EF-Ts"/>
    <property type="match status" value="1"/>
</dbReference>
<dbReference type="FunFam" id="1.10.8.10:FF:000001">
    <property type="entry name" value="Elongation factor Ts"/>
    <property type="match status" value="1"/>
</dbReference>
<dbReference type="Gene3D" id="1.10.286.20">
    <property type="match status" value="1"/>
</dbReference>
<dbReference type="Gene3D" id="1.10.8.10">
    <property type="entry name" value="DNA helicase RuvA subunit, C-terminal domain"/>
    <property type="match status" value="1"/>
</dbReference>
<dbReference type="Gene3D" id="3.30.479.20">
    <property type="entry name" value="Elongation factor Ts, dimerisation domain"/>
    <property type="match status" value="2"/>
</dbReference>
<dbReference type="HAMAP" id="MF_00050">
    <property type="entry name" value="EF_Ts"/>
    <property type="match status" value="1"/>
</dbReference>
<dbReference type="InterPro" id="IPR036402">
    <property type="entry name" value="EF-Ts_dimer_sf"/>
</dbReference>
<dbReference type="InterPro" id="IPR001816">
    <property type="entry name" value="Transl_elong_EFTs/EF1B"/>
</dbReference>
<dbReference type="InterPro" id="IPR014039">
    <property type="entry name" value="Transl_elong_EFTs/EF1B_dimer"/>
</dbReference>
<dbReference type="InterPro" id="IPR018101">
    <property type="entry name" value="Transl_elong_Ts_CS"/>
</dbReference>
<dbReference type="InterPro" id="IPR009060">
    <property type="entry name" value="UBA-like_sf"/>
</dbReference>
<dbReference type="NCBIfam" id="TIGR00116">
    <property type="entry name" value="tsf"/>
    <property type="match status" value="1"/>
</dbReference>
<dbReference type="PANTHER" id="PTHR11741">
    <property type="entry name" value="ELONGATION FACTOR TS"/>
    <property type="match status" value="1"/>
</dbReference>
<dbReference type="PANTHER" id="PTHR11741:SF0">
    <property type="entry name" value="ELONGATION FACTOR TS, MITOCHONDRIAL"/>
    <property type="match status" value="1"/>
</dbReference>
<dbReference type="Pfam" id="PF00889">
    <property type="entry name" value="EF_TS"/>
    <property type="match status" value="1"/>
</dbReference>
<dbReference type="SUPFAM" id="SSF54713">
    <property type="entry name" value="Elongation factor Ts (EF-Ts), dimerisation domain"/>
    <property type="match status" value="1"/>
</dbReference>
<dbReference type="SUPFAM" id="SSF46934">
    <property type="entry name" value="UBA-like"/>
    <property type="match status" value="1"/>
</dbReference>
<dbReference type="PROSITE" id="PS01126">
    <property type="entry name" value="EF_TS_1"/>
    <property type="match status" value="1"/>
</dbReference>